<name>Y3761_ANADF</name>
<accession>A7HGU4</accession>
<proteinExistence type="inferred from homology"/>
<reference key="1">
    <citation type="journal article" date="2015" name="Genome Announc.">
        <title>Complete genome sequence of Anaeromyxobacter sp. Fw109-5, an anaerobic, metal-reducing bacterium isolated from a contaminated subsurface environment.</title>
        <authorList>
            <person name="Hwang C."/>
            <person name="Copeland A."/>
            <person name="Lucas S."/>
            <person name="Lapidus A."/>
            <person name="Barry K."/>
            <person name="Glavina Del Rio T."/>
            <person name="Dalin E."/>
            <person name="Tice H."/>
            <person name="Pitluck S."/>
            <person name="Sims D."/>
            <person name="Brettin T."/>
            <person name="Bruce D.C."/>
            <person name="Detter J.C."/>
            <person name="Han C.S."/>
            <person name="Schmutz J."/>
            <person name="Larimer F.W."/>
            <person name="Land M.L."/>
            <person name="Hauser L.J."/>
            <person name="Kyrpides N."/>
            <person name="Lykidis A."/>
            <person name="Richardson P."/>
            <person name="Belieav A."/>
            <person name="Sanford R.A."/>
            <person name="Loeffler F.E."/>
            <person name="Fields M.W."/>
        </authorList>
    </citation>
    <scope>NUCLEOTIDE SEQUENCE [LARGE SCALE GENOMIC DNA]</scope>
    <source>
        <strain>Fw109-5</strain>
    </source>
</reference>
<gene>
    <name type="ordered locus">Anae109_3761</name>
</gene>
<dbReference type="EMBL" id="CP000769">
    <property type="protein sequence ID" value="ABS27940.1"/>
    <property type="molecule type" value="Genomic_DNA"/>
</dbReference>
<dbReference type="RefSeq" id="WP_012098568.1">
    <property type="nucleotide sequence ID" value="NC_009675.1"/>
</dbReference>
<dbReference type="SMR" id="A7HGU4"/>
<dbReference type="STRING" id="404589.Anae109_3761"/>
<dbReference type="KEGG" id="afw:Anae109_3761"/>
<dbReference type="eggNOG" id="COG0718">
    <property type="taxonomic scope" value="Bacteria"/>
</dbReference>
<dbReference type="HOGENOM" id="CLU_140930_1_0_7"/>
<dbReference type="OrthoDB" id="9803080at2"/>
<dbReference type="Proteomes" id="UP000006382">
    <property type="component" value="Chromosome"/>
</dbReference>
<dbReference type="GO" id="GO:0043590">
    <property type="term" value="C:bacterial nucleoid"/>
    <property type="evidence" value="ECO:0007669"/>
    <property type="project" value="UniProtKB-UniRule"/>
</dbReference>
<dbReference type="GO" id="GO:0005829">
    <property type="term" value="C:cytosol"/>
    <property type="evidence" value="ECO:0007669"/>
    <property type="project" value="TreeGrafter"/>
</dbReference>
<dbReference type="GO" id="GO:0003677">
    <property type="term" value="F:DNA binding"/>
    <property type="evidence" value="ECO:0007669"/>
    <property type="project" value="UniProtKB-UniRule"/>
</dbReference>
<dbReference type="Gene3D" id="3.30.1310.10">
    <property type="entry name" value="Nucleoid-associated protein YbaB-like domain"/>
    <property type="match status" value="1"/>
</dbReference>
<dbReference type="HAMAP" id="MF_00274">
    <property type="entry name" value="DNA_YbaB_EbfC"/>
    <property type="match status" value="1"/>
</dbReference>
<dbReference type="InterPro" id="IPR036894">
    <property type="entry name" value="YbaB-like_sf"/>
</dbReference>
<dbReference type="InterPro" id="IPR004401">
    <property type="entry name" value="YbaB/EbfC"/>
</dbReference>
<dbReference type="NCBIfam" id="TIGR00103">
    <property type="entry name" value="DNA_YbaB_EbfC"/>
    <property type="match status" value="1"/>
</dbReference>
<dbReference type="PANTHER" id="PTHR33449">
    <property type="entry name" value="NUCLEOID-ASSOCIATED PROTEIN YBAB"/>
    <property type="match status" value="1"/>
</dbReference>
<dbReference type="PANTHER" id="PTHR33449:SF1">
    <property type="entry name" value="NUCLEOID-ASSOCIATED PROTEIN YBAB"/>
    <property type="match status" value="1"/>
</dbReference>
<dbReference type="Pfam" id="PF02575">
    <property type="entry name" value="YbaB_DNA_bd"/>
    <property type="match status" value="1"/>
</dbReference>
<dbReference type="PIRSF" id="PIRSF004555">
    <property type="entry name" value="UCP004555"/>
    <property type="match status" value="1"/>
</dbReference>
<dbReference type="SUPFAM" id="SSF82607">
    <property type="entry name" value="YbaB-like"/>
    <property type="match status" value="1"/>
</dbReference>
<keyword id="KW-0963">Cytoplasm</keyword>
<keyword id="KW-0238">DNA-binding</keyword>
<keyword id="KW-1185">Reference proteome</keyword>
<protein>
    <recommendedName>
        <fullName evidence="1">Nucleoid-associated protein Anae109_3761</fullName>
    </recommendedName>
</protein>
<comment type="function">
    <text evidence="1">Binds to DNA and alters its conformation. May be involved in regulation of gene expression, nucleoid organization and DNA protection.</text>
</comment>
<comment type="subunit">
    <text evidence="1">Homodimer.</text>
</comment>
<comment type="subcellular location">
    <subcellularLocation>
        <location evidence="1">Cytoplasm</location>
        <location evidence="1">Nucleoid</location>
    </subcellularLocation>
</comment>
<comment type="similarity">
    <text evidence="1">Belongs to the YbaB/EbfC family.</text>
</comment>
<organism>
    <name type="scientific">Anaeromyxobacter sp. (strain Fw109-5)</name>
    <dbReference type="NCBI Taxonomy" id="404589"/>
    <lineage>
        <taxon>Bacteria</taxon>
        <taxon>Pseudomonadati</taxon>
        <taxon>Myxococcota</taxon>
        <taxon>Myxococcia</taxon>
        <taxon>Myxococcales</taxon>
        <taxon>Cystobacterineae</taxon>
        <taxon>Anaeromyxobacteraceae</taxon>
        <taxon>Anaeromyxobacter</taxon>
    </lineage>
</organism>
<sequence>MDIQYLMRQAKKLEKAMADAKEQLAELSVEAESGGGLVKVTMNGKCEVTRLLVDPKAVDPADKAMLEDLVTAAVNAAVEKARAAADEHMARATGGIKIPGVAG</sequence>
<feature type="chain" id="PRO_1000003680" description="Nucleoid-associated protein Anae109_3761">
    <location>
        <begin position="1"/>
        <end position="103"/>
    </location>
</feature>
<evidence type="ECO:0000255" key="1">
    <source>
        <dbReference type="HAMAP-Rule" id="MF_00274"/>
    </source>
</evidence>